<proteinExistence type="inferred from homology"/>
<evidence type="ECO:0000255" key="1">
    <source>
        <dbReference type="HAMAP-Rule" id="MF_01204"/>
    </source>
</evidence>
<protein>
    <recommendedName>
        <fullName evidence="1">Probable malonic semialdehyde reductase RutE</fullName>
        <ecNumber evidence="1">1.1.1.298</ecNumber>
    </recommendedName>
</protein>
<sequence>MNEAVSPGALSTLFTDARTHNGWREPPVSDETLREIYAQMKWGPTSANCSPARIVFIRTAEGKERLRPALSSGNLQKTLTAPVTAIVAWDSEFYERLPQLFPHGDARSWFTSSPQLAEETAFRNSSMQAAYLIVACRALGLDTGPMSGFDRQYVDDAFFAGSTLKSNLLINIGYGDSSKLFARLPRLSFEEACGLL</sequence>
<comment type="function">
    <text evidence="1">May reduce toxic product malonic semialdehyde to 3-hydroxypropionic acid, which is excreted.</text>
</comment>
<comment type="catalytic activity">
    <reaction evidence="1">
        <text>3-hydroxypropanoate + NADP(+) = 3-oxopropanoate + NADPH + H(+)</text>
        <dbReference type="Rhea" id="RHEA:26438"/>
        <dbReference type="ChEBI" id="CHEBI:15378"/>
        <dbReference type="ChEBI" id="CHEBI:16510"/>
        <dbReference type="ChEBI" id="CHEBI:33190"/>
        <dbReference type="ChEBI" id="CHEBI:57783"/>
        <dbReference type="ChEBI" id="CHEBI:58349"/>
        <dbReference type="EC" id="1.1.1.298"/>
    </reaction>
</comment>
<comment type="cofactor">
    <cofactor evidence="1">
        <name>FMN</name>
        <dbReference type="ChEBI" id="CHEBI:58210"/>
    </cofactor>
</comment>
<comment type="induction">
    <text evidence="1">Up-regulated by the nitrogen regulatory protein C (NtrC also called GlnG) and repressed by RutR.</text>
</comment>
<comment type="similarity">
    <text evidence="1">Belongs to the nitroreductase family. HadB/RutE subfamily.</text>
</comment>
<reference key="1">
    <citation type="journal article" date="2009" name="PLoS Genet.">
        <title>Organised genome dynamics in the Escherichia coli species results in highly diverse adaptive paths.</title>
        <authorList>
            <person name="Touchon M."/>
            <person name="Hoede C."/>
            <person name="Tenaillon O."/>
            <person name="Barbe V."/>
            <person name="Baeriswyl S."/>
            <person name="Bidet P."/>
            <person name="Bingen E."/>
            <person name="Bonacorsi S."/>
            <person name="Bouchier C."/>
            <person name="Bouvet O."/>
            <person name="Calteau A."/>
            <person name="Chiapello H."/>
            <person name="Clermont O."/>
            <person name="Cruveiller S."/>
            <person name="Danchin A."/>
            <person name="Diard M."/>
            <person name="Dossat C."/>
            <person name="Karoui M.E."/>
            <person name="Frapy E."/>
            <person name="Garry L."/>
            <person name="Ghigo J.M."/>
            <person name="Gilles A.M."/>
            <person name="Johnson J."/>
            <person name="Le Bouguenec C."/>
            <person name="Lescat M."/>
            <person name="Mangenot S."/>
            <person name="Martinez-Jehanne V."/>
            <person name="Matic I."/>
            <person name="Nassif X."/>
            <person name="Oztas S."/>
            <person name="Petit M.A."/>
            <person name="Pichon C."/>
            <person name="Rouy Z."/>
            <person name="Ruf C.S."/>
            <person name="Schneider D."/>
            <person name="Tourret J."/>
            <person name="Vacherie B."/>
            <person name="Vallenet D."/>
            <person name="Medigue C."/>
            <person name="Rocha E.P.C."/>
            <person name="Denamur E."/>
        </authorList>
    </citation>
    <scope>NUCLEOTIDE SEQUENCE [LARGE SCALE GENOMIC DNA]</scope>
    <source>
        <strain>ED1a</strain>
    </source>
</reference>
<keyword id="KW-0285">Flavoprotein</keyword>
<keyword id="KW-0288">FMN</keyword>
<keyword id="KW-0520">NAD</keyword>
<keyword id="KW-0521">NADP</keyword>
<keyword id="KW-0560">Oxidoreductase</keyword>
<accession>B7MTF1</accession>
<name>RUTE_ECO81</name>
<organism>
    <name type="scientific">Escherichia coli O81 (strain ED1a)</name>
    <dbReference type="NCBI Taxonomy" id="585397"/>
    <lineage>
        <taxon>Bacteria</taxon>
        <taxon>Pseudomonadati</taxon>
        <taxon>Pseudomonadota</taxon>
        <taxon>Gammaproteobacteria</taxon>
        <taxon>Enterobacterales</taxon>
        <taxon>Enterobacteriaceae</taxon>
        <taxon>Escherichia</taxon>
    </lineage>
</organism>
<gene>
    <name evidence="1" type="primary">rutE</name>
    <name type="ordered locus">ECED1_1164</name>
</gene>
<feature type="chain" id="PRO_1000164652" description="Probable malonic semialdehyde reductase RutE">
    <location>
        <begin position="1"/>
        <end position="196"/>
    </location>
</feature>
<dbReference type="EC" id="1.1.1.298" evidence="1"/>
<dbReference type="EMBL" id="CU928162">
    <property type="protein sequence ID" value="CAR07365.1"/>
    <property type="molecule type" value="Genomic_DNA"/>
</dbReference>
<dbReference type="RefSeq" id="WP_001001164.1">
    <property type="nucleotide sequence ID" value="NC_011745.1"/>
</dbReference>
<dbReference type="SMR" id="B7MTF1"/>
<dbReference type="KEGG" id="ecq:ECED1_1164"/>
<dbReference type="HOGENOM" id="CLU_084441_0_0_6"/>
<dbReference type="Proteomes" id="UP000000748">
    <property type="component" value="Chromosome"/>
</dbReference>
<dbReference type="GO" id="GO:0035527">
    <property type="term" value="F:3-hydroxypropionate dehydrogenase (NADP+) activity"/>
    <property type="evidence" value="ECO:0007669"/>
    <property type="project" value="UniProtKB-UniRule"/>
</dbReference>
<dbReference type="GO" id="GO:0019740">
    <property type="term" value="P:nitrogen utilization"/>
    <property type="evidence" value="ECO:0007669"/>
    <property type="project" value="UniProtKB-UniRule"/>
</dbReference>
<dbReference type="GO" id="GO:0006212">
    <property type="term" value="P:uracil catabolic process"/>
    <property type="evidence" value="ECO:0007669"/>
    <property type="project" value="UniProtKB-UniRule"/>
</dbReference>
<dbReference type="CDD" id="cd02148">
    <property type="entry name" value="RutE-like"/>
    <property type="match status" value="1"/>
</dbReference>
<dbReference type="FunFam" id="3.40.109.10:FF:000003">
    <property type="entry name" value="Probable malonic semialdehyde reductase RutE"/>
    <property type="match status" value="1"/>
</dbReference>
<dbReference type="Gene3D" id="3.40.109.10">
    <property type="entry name" value="NADH Oxidase"/>
    <property type="match status" value="1"/>
</dbReference>
<dbReference type="HAMAP" id="MF_01204">
    <property type="entry name" value="Oxidoreductase_RutE_HadB"/>
    <property type="match status" value="1"/>
</dbReference>
<dbReference type="InterPro" id="IPR029479">
    <property type="entry name" value="Nitroreductase"/>
</dbReference>
<dbReference type="InterPro" id="IPR000415">
    <property type="entry name" value="Nitroreductase-like"/>
</dbReference>
<dbReference type="InterPro" id="IPR050461">
    <property type="entry name" value="Nitroreductase_HadB/RutE"/>
</dbReference>
<dbReference type="InterPro" id="IPR023936">
    <property type="entry name" value="RutE-like"/>
</dbReference>
<dbReference type="NCBIfam" id="NF003768">
    <property type="entry name" value="PRK05365.1"/>
    <property type="match status" value="1"/>
</dbReference>
<dbReference type="PANTHER" id="PTHR43543">
    <property type="entry name" value="MALONIC SEMIALDEHYDE REDUCTASE RUTE-RELATED"/>
    <property type="match status" value="1"/>
</dbReference>
<dbReference type="PANTHER" id="PTHR43543:SF1">
    <property type="entry name" value="MALONIC SEMIALDEHYDE REDUCTASE RUTE-RELATED"/>
    <property type="match status" value="1"/>
</dbReference>
<dbReference type="Pfam" id="PF00881">
    <property type="entry name" value="Nitroreductase"/>
    <property type="match status" value="1"/>
</dbReference>
<dbReference type="SUPFAM" id="SSF55469">
    <property type="entry name" value="FMN-dependent nitroreductase-like"/>
    <property type="match status" value="1"/>
</dbReference>